<gene>
    <name evidence="1" type="primary">rplJ</name>
    <name type="ordered locus">BCA_0128</name>
</gene>
<name>RL10_BACC3</name>
<sequence>MSKVIETKQQVVTEIADKLRASKSTIVVDYRGLTVSEATELRKQLREAGVEFKVYKNSLTRRAAESAEMAELNEFLTGPNAIAFSNEDVVAPAKVLNDFAKDHEALEIKAGVIEGKLVTLDEVKAIATLPSREGLLSMLLSVLQAPIRNLALATKAVADQKEEQGA</sequence>
<feature type="chain" id="PRO_1000195526" description="Large ribosomal subunit protein uL10">
    <location>
        <begin position="1"/>
        <end position="166"/>
    </location>
</feature>
<reference key="1">
    <citation type="submission" date="2009-02" db="EMBL/GenBank/DDBJ databases">
        <title>Genome sequence of Bacillus cereus 03BB102.</title>
        <authorList>
            <person name="Dodson R.J."/>
            <person name="Jackson P."/>
            <person name="Munk A.C."/>
            <person name="Brettin T."/>
            <person name="Bruce D."/>
            <person name="Detter C."/>
            <person name="Tapia R."/>
            <person name="Han C."/>
            <person name="Sutton G."/>
            <person name="Sims D."/>
        </authorList>
    </citation>
    <scope>NUCLEOTIDE SEQUENCE [LARGE SCALE GENOMIC DNA]</scope>
    <source>
        <strain>03BB102</strain>
    </source>
</reference>
<comment type="function">
    <text evidence="1">Forms part of the ribosomal stalk, playing a central role in the interaction of the ribosome with GTP-bound translation factors.</text>
</comment>
<comment type="subunit">
    <text evidence="1">Part of the ribosomal stalk of the 50S ribosomal subunit. The N-terminus interacts with L11 and the large rRNA to form the base of the stalk. The C-terminus forms an elongated spine to which L12 dimers bind in a sequential fashion forming a multimeric L10(L12)X complex.</text>
</comment>
<comment type="similarity">
    <text evidence="1">Belongs to the universal ribosomal protein uL10 family.</text>
</comment>
<accession>C1ET28</accession>
<keyword id="KW-0687">Ribonucleoprotein</keyword>
<keyword id="KW-0689">Ribosomal protein</keyword>
<keyword id="KW-0694">RNA-binding</keyword>
<keyword id="KW-0699">rRNA-binding</keyword>
<dbReference type="EMBL" id="CP001407">
    <property type="protein sequence ID" value="ACO27663.1"/>
    <property type="molecule type" value="Genomic_DNA"/>
</dbReference>
<dbReference type="RefSeq" id="WP_000048716.1">
    <property type="nucleotide sequence ID" value="NZ_CP009318.1"/>
</dbReference>
<dbReference type="SMR" id="C1ET28"/>
<dbReference type="GeneID" id="93010954"/>
<dbReference type="KEGG" id="bcx:BCA_0128"/>
<dbReference type="PATRIC" id="fig|572264.18.peg.163"/>
<dbReference type="Proteomes" id="UP000002210">
    <property type="component" value="Chromosome"/>
</dbReference>
<dbReference type="GO" id="GO:0015934">
    <property type="term" value="C:large ribosomal subunit"/>
    <property type="evidence" value="ECO:0007669"/>
    <property type="project" value="InterPro"/>
</dbReference>
<dbReference type="GO" id="GO:0070180">
    <property type="term" value="F:large ribosomal subunit rRNA binding"/>
    <property type="evidence" value="ECO:0007669"/>
    <property type="project" value="UniProtKB-UniRule"/>
</dbReference>
<dbReference type="GO" id="GO:0003735">
    <property type="term" value="F:structural constituent of ribosome"/>
    <property type="evidence" value="ECO:0007669"/>
    <property type="project" value="InterPro"/>
</dbReference>
<dbReference type="GO" id="GO:0006412">
    <property type="term" value="P:translation"/>
    <property type="evidence" value="ECO:0007669"/>
    <property type="project" value="UniProtKB-UniRule"/>
</dbReference>
<dbReference type="CDD" id="cd05797">
    <property type="entry name" value="Ribosomal_L10"/>
    <property type="match status" value="1"/>
</dbReference>
<dbReference type="FunFam" id="3.30.70.1730:FF:000001">
    <property type="entry name" value="50S ribosomal protein L10"/>
    <property type="match status" value="1"/>
</dbReference>
<dbReference type="Gene3D" id="3.30.70.1730">
    <property type="match status" value="1"/>
</dbReference>
<dbReference type="Gene3D" id="6.10.250.290">
    <property type="match status" value="1"/>
</dbReference>
<dbReference type="HAMAP" id="MF_00362">
    <property type="entry name" value="Ribosomal_uL10"/>
    <property type="match status" value="1"/>
</dbReference>
<dbReference type="InterPro" id="IPR001790">
    <property type="entry name" value="Ribosomal_uL10"/>
</dbReference>
<dbReference type="InterPro" id="IPR043141">
    <property type="entry name" value="Ribosomal_uL10-like_sf"/>
</dbReference>
<dbReference type="InterPro" id="IPR022973">
    <property type="entry name" value="Ribosomal_uL10_bac"/>
</dbReference>
<dbReference type="InterPro" id="IPR047865">
    <property type="entry name" value="Ribosomal_uL10_bac_type"/>
</dbReference>
<dbReference type="InterPro" id="IPR002363">
    <property type="entry name" value="Ribosomal_uL10_CS_bac"/>
</dbReference>
<dbReference type="NCBIfam" id="NF000955">
    <property type="entry name" value="PRK00099.1-1"/>
    <property type="match status" value="1"/>
</dbReference>
<dbReference type="PANTHER" id="PTHR11560">
    <property type="entry name" value="39S RIBOSOMAL PROTEIN L10, MITOCHONDRIAL"/>
    <property type="match status" value="1"/>
</dbReference>
<dbReference type="Pfam" id="PF00466">
    <property type="entry name" value="Ribosomal_L10"/>
    <property type="match status" value="1"/>
</dbReference>
<dbReference type="SUPFAM" id="SSF160369">
    <property type="entry name" value="Ribosomal protein L10-like"/>
    <property type="match status" value="1"/>
</dbReference>
<dbReference type="PROSITE" id="PS01109">
    <property type="entry name" value="RIBOSOMAL_L10"/>
    <property type="match status" value="1"/>
</dbReference>
<protein>
    <recommendedName>
        <fullName evidence="1">Large ribosomal subunit protein uL10</fullName>
    </recommendedName>
    <alternativeName>
        <fullName evidence="2">50S ribosomal protein L10</fullName>
    </alternativeName>
</protein>
<organism>
    <name type="scientific">Bacillus cereus (strain 03BB102)</name>
    <dbReference type="NCBI Taxonomy" id="572264"/>
    <lineage>
        <taxon>Bacteria</taxon>
        <taxon>Bacillati</taxon>
        <taxon>Bacillota</taxon>
        <taxon>Bacilli</taxon>
        <taxon>Bacillales</taxon>
        <taxon>Bacillaceae</taxon>
        <taxon>Bacillus</taxon>
        <taxon>Bacillus cereus group</taxon>
    </lineage>
</organism>
<proteinExistence type="inferred from homology"/>
<evidence type="ECO:0000255" key="1">
    <source>
        <dbReference type="HAMAP-Rule" id="MF_00362"/>
    </source>
</evidence>
<evidence type="ECO:0000305" key="2"/>